<protein>
    <recommendedName>
        <fullName evidence="1">GTPase Era</fullName>
    </recommendedName>
</protein>
<proteinExistence type="inferred from homology"/>
<comment type="function">
    <text evidence="1">An essential GTPase that binds both GDP and GTP, with rapid nucleotide exchange. Plays a role in 16S rRNA processing and 30S ribosomal subunit biogenesis and possibly also in cell cycle regulation and energy metabolism.</text>
</comment>
<comment type="subunit">
    <text evidence="1">Monomer.</text>
</comment>
<comment type="subcellular location">
    <subcellularLocation>
        <location>Cytoplasm</location>
    </subcellularLocation>
    <subcellularLocation>
        <location evidence="1">Cell membrane</location>
        <topology evidence="1">Peripheral membrane protein</topology>
    </subcellularLocation>
</comment>
<comment type="similarity">
    <text evidence="1 2">Belongs to the TRAFAC class TrmE-Era-EngA-EngB-Septin-like GTPase superfamily. Era GTPase family.</text>
</comment>
<evidence type="ECO:0000255" key="1">
    <source>
        <dbReference type="HAMAP-Rule" id="MF_00367"/>
    </source>
</evidence>
<evidence type="ECO:0000255" key="2">
    <source>
        <dbReference type="PROSITE-ProRule" id="PRU01050"/>
    </source>
</evidence>
<reference key="1">
    <citation type="submission" date="2007-04" db="EMBL/GenBank/DDBJ databases">
        <title>Genome sequence of the thermophilic hydrogen-producing bacterium Caldicellulosiruptor saccharolyticus DSM 8903.</title>
        <authorList>
            <person name="Copeland A."/>
            <person name="Lucas S."/>
            <person name="Lapidus A."/>
            <person name="Barry K."/>
            <person name="Detter J.C."/>
            <person name="Glavina del Rio T."/>
            <person name="Hammon N."/>
            <person name="Israni S."/>
            <person name="Dalin E."/>
            <person name="Tice H."/>
            <person name="Pitluck S."/>
            <person name="Kiss H."/>
            <person name="Brettin T."/>
            <person name="Bruce D."/>
            <person name="Han C."/>
            <person name="Schmutz J."/>
            <person name="Larimer F."/>
            <person name="Land M."/>
            <person name="Hauser L."/>
            <person name="Kyrpides N."/>
            <person name="Lykidis A."/>
            <person name="van de Werken H.J.G."/>
            <person name="Verhaart M.R.A."/>
            <person name="VanFossen A.L."/>
            <person name="Lewis D.L."/>
            <person name="Nichols J.D."/>
            <person name="Goorissen H.P."/>
            <person name="van Niel E.W.J."/>
            <person name="Stams F.J.M."/>
            <person name="Willquist K.U."/>
            <person name="Ward D.E."/>
            <person name="van der Oost J."/>
            <person name="Kelly R.M."/>
            <person name="Kengen S.M.W."/>
            <person name="Richardson P."/>
        </authorList>
    </citation>
    <scope>NUCLEOTIDE SEQUENCE [LARGE SCALE GENOMIC DNA]</scope>
    <source>
        <strain>ATCC 43494 / DSM 8903 / Tp8T 6331</strain>
    </source>
</reference>
<organism>
    <name type="scientific">Caldicellulosiruptor saccharolyticus (strain ATCC 43494 / DSM 8903 / Tp8T 6331)</name>
    <dbReference type="NCBI Taxonomy" id="351627"/>
    <lineage>
        <taxon>Bacteria</taxon>
        <taxon>Bacillati</taxon>
        <taxon>Bacillota</taxon>
        <taxon>Bacillota incertae sedis</taxon>
        <taxon>Caldicellulosiruptorales</taxon>
        <taxon>Caldicellulosiruptoraceae</taxon>
        <taxon>Caldicellulosiruptor</taxon>
    </lineage>
</organism>
<sequence length="300" mass="33870">MAFKSGFVALIGRPNVGKSTLMNYFVGKKISIISPKPQTTRNSIKGILTLDDAQIIFIDTPGVHPPKNKLGEYMVKVSEKTLKEVDLILYIVEAIDSGIGPWDEAILEKLKEVQTPKILVLNKADLASKENIEILKSLFSGRLSFEFIIEIAAINGYNCDVLLEKIKKLLPEGPKYYLDDMTTDVRESFIVSEIIREKILLNLSEEVPHGVGVSVERFSEREDKDILDIEATIYCEKESHKAIIIGKGGQMLKKIGMQAREELEMLFGIKVNLQLWVKVKKNWRDDIAAMKMLGYNLKEV</sequence>
<dbReference type="EMBL" id="CP000679">
    <property type="protein sequence ID" value="ABP67543.1"/>
    <property type="molecule type" value="Genomic_DNA"/>
</dbReference>
<dbReference type="RefSeq" id="WP_011917479.1">
    <property type="nucleotide sequence ID" value="NC_009437.1"/>
</dbReference>
<dbReference type="SMR" id="A4XKV8"/>
<dbReference type="STRING" id="351627.Csac_1958"/>
<dbReference type="KEGG" id="csc:Csac_1958"/>
<dbReference type="eggNOG" id="COG1159">
    <property type="taxonomic scope" value="Bacteria"/>
</dbReference>
<dbReference type="HOGENOM" id="CLU_038009_1_0_9"/>
<dbReference type="OrthoDB" id="9805918at2"/>
<dbReference type="Proteomes" id="UP000000256">
    <property type="component" value="Chromosome"/>
</dbReference>
<dbReference type="GO" id="GO:0005829">
    <property type="term" value="C:cytosol"/>
    <property type="evidence" value="ECO:0007669"/>
    <property type="project" value="TreeGrafter"/>
</dbReference>
<dbReference type="GO" id="GO:0005886">
    <property type="term" value="C:plasma membrane"/>
    <property type="evidence" value="ECO:0007669"/>
    <property type="project" value="UniProtKB-SubCell"/>
</dbReference>
<dbReference type="GO" id="GO:0005525">
    <property type="term" value="F:GTP binding"/>
    <property type="evidence" value="ECO:0007669"/>
    <property type="project" value="UniProtKB-UniRule"/>
</dbReference>
<dbReference type="GO" id="GO:0003924">
    <property type="term" value="F:GTPase activity"/>
    <property type="evidence" value="ECO:0007669"/>
    <property type="project" value="UniProtKB-UniRule"/>
</dbReference>
<dbReference type="GO" id="GO:0043024">
    <property type="term" value="F:ribosomal small subunit binding"/>
    <property type="evidence" value="ECO:0007669"/>
    <property type="project" value="TreeGrafter"/>
</dbReference>
<dbReference type="GO" id="GO:0070181">
    <property type="term" value="F:small ribosomal subunit rRNA binding"/>
    <property type="evidence" value="ECO:0007669"/>
    <property type="project" value="UniProtKB-UniRule"/>
</dbReference>
<dbReference type="GO" id="GO:0000028">
    <property type="term" value="P:ribosomal small subunit assembly"/>
    <property type="evidence" value="ECO:0007669"/>
    <property type="project" value="TreeGrafter"/>
</dbReference>
<dbReference type="CDD" id="cd04163">
    <property type="entry name" value="Era"/>
    <property type="match status" value="1"/>
</dbReference>
<dbReference type="CDD" id="cd22534">
    <property type="entry name" value="KH-II_Era"/>
    <property type="match status" value="1"/>
</dbReference>
<dbReference type="FunFam" id="3.30.300.20:FF:000003">
    <property type="entry name" value="GTPase Era"/>
    <property type="match status" value="1"/>
</dbReference>
<dbReference type="Gene3D" id="3.30.300.20">
    <property type="match status" value="1"/>
</dbReference>
<dbReference type="Gene3D" id="3.40.50.300">
    <property type="entry name" value="P-loop containing nucleotide triphosphate hydrolases"/>
    <property type="match status" value="1"/>
</dbReference>
<dbReference type="HAMAP" id="MF_00367">
    <property type="entry name" value="GTPase_Era"/>
    <property type="match status" value="1"/>
</dbReference>
<dbReference type="InterPro" id="IPR030388">
    <property type="entry name" value="G_ERA_dom"/>
</dbReference>
<dbReference type="InterPro" id="IPR006073">
    <property type="entry name" value="GTP-bd"/>
</dbReference>
<dbReference type="InterPro" id="IPR005662">
    <property type="entry name" value="GTPase_Era-like"/>
</dbReference>
<dbReference type="InterPro" id="IPR015946">
    <property type="entry name" value="KH_dom-like_a/b"/>
</dbReference>
<dbReference type="InterPro" id="IPR004044">
    <property type="entry name" value="KH_dom_type_2"/>
</dbReference>
<dbReference type="InterPro" id="IPR009019">
    <property type="entry name" value="KH_sf_prok-type"/>
</dbReference>
<dbReference type="InterPro" id="IPR027417">
    <property type="entry name" value="P-loop_NTPase"/>
</dbReference>
<dbReference type="InterPro" id="IPR005225">
    <property type="entry name" value="Small_GTP-bd"/>
</dbReference>
<dbReference type="NCBIfam" id="TIGR00436">
    <property type="entry name" value="era"/>
    <property type="match status" value="1"/>
</dbReference>
<dbReference type="NCBIfam" id="NF000908">
    <property type="entry name" value="PRK00089.1"/>
    <property type="match status" value="1"/>
</dbReference>
<dbReference type="NCBIfam" id="TIGR00231">
    <property type="entry name" value="small_GTP"/>
    <property type="match status" value="1"/>
</dbReference>
<dbReference type="PANTHER" id="PTHR42698">
    <property type="entry name" value="GTPASE ERA"/>
    <property type="match status" value="1"/>
</dbReference>
<dbReference type="PANTHER" id="PTHR42698:SF1">
    <property type="entry name" value="GTPASE ERA, MITOCHONDRIAL"/>
    <property type="match status" value="1"/>
</dbReference>
<dbReference type="Pfam" id="PF07650">
    <property type="entry name" value="KH_2"/>
    <property type="match status" value="1"/>
</dbReference>
<dbReference type="Pfam" id="PF01926">
    <property type="entry name" value="MMR_HSR1"/>
    <property type="match status" value="1"/>
</dbReference>
<dbReference type="SUPFAM" id="SSF52540">
    <property type="entry name" value="P-loop containing nucleoside triphosphate hydrolases"/>
    <property type="match status" value="1"/>
</dbReference>
<dbReference type="SUPFAM" id="SSF54814">
    <property type="entry name" value="Prokaryotic type KH domain (KH-domain type II)"/>
    <property type="match status" value="1"/>
</dbReference>
<dbReference type="PROSITE" id="PS51713">
    <property type="entry name" value="G_ERA"/>
    <property type="match status" value="1"/>
</dbReference>
<dbReference type="PROSITE" id="PS50823">
    <property type="entry name" value="KH_TYPE_2"/>
    <property type="match status" value="1"/>
</dbReference>
<name>ERA_CALS8</name>
<keyword id="KW-1003">Cell membrane</keyword>
<keyword id="KW-0963">Cytoplasm</keyword>
<keyword id="KW-0342">GTP-binding</keyword>
<keyword id="KW-0472">Membrane</keyword>
<keyword id="KW-0547">Nucleotide-binding</keyword>
<keyword id="KW-0690">Ribosome biogenesis</keyword>
<keyword id="KW-0694">RNA-binding</keyword>
<keyword id="KW-0699">rRNA-binding</keyword>
<accession>A4XKV8</accession>
<gene>
    <name evidence="1" type="primary">era</name>
    <name type="ordered locus">Csac_1958</name>
</gene>
<feature type="chain" id="PRO_1000079661" description="GTPase Era">
    <location>
        <begin position="1"/>
        <end position="300"/>
    </location>
</feature>
<feature type="domain" description="Era-type G" evidence="2">
    <location>
        <begin position="4"/>
        <end position="172"/>
    </location>
</feature>
<feature type="domain" description="KH type-2" evidence="1">
    <location>
        <begin position="195"/>
        <end position="281"/>
    </location>
</feature>
<feature type="region of interest" description="G1" evidence="2">
    <location>
        <begin position="12"/>
        <end position="19"/>
    </location>
</feature>
<feature type="region of interest" description="G2" evidence="2">
    <location>
        <begin position="38"/>
        <end position="42"/>
    </location>
</feature>
<feature type="region of interest" description="G3" evidence="2">
    <location>
        <begin position="59"/>
        <end position="62"/>
    </location>
</feature>
<feature type="region of interest" description="G4" evidence="2">
    <location>
        <begin position="122"/>
        <end position="125"/>
    </location>
</feature>
<feature type="region of interest" description="G5" evidence="2">
    <location>
        <begin position="151"/>
        <end position="153"/>
    </location>
</feature>
<feature type="binding site" evidence="1">
    <location>
        <begin position="12"/>
        <end position="19"/>
    </location>
    <ligand>
        <name>GTP</name>
        <dbReference type="ChEBI" id="CHEBI:37565"/>
    </ligand>
</feature>
<feature type="binding site" evidence="1">
    <location>
        <begin position="59"/>
        <end position="63"/>
    </location>
    <ligand>
        <name>GTP</name>
        <dbReference type="ChEBI" id="CHEBI:37565"/>
    </ligand>
</feature>
<feature type="binding site" evidence="1">
    <location>
        <begin position="122"/>
        <end position="125"/>
    </location>
    <ligand>
        <name>GTP</name>
        <dbReference type="ChEBI" id="CHEBI:37565"/>
    </ligand>
</feature>